<evidence type="ECO:0000250" key="1">
    <source>
        <dbReference type="UniProtKB" id="Q8IVG9"/>
    </source>
</evidence>
<evidence type="ECO:0000269" key="2">
    <source>
    </source>
</evidence>
<evidence type="ECO:0000303" key="3">
    <source>
    </source>
</evidence>
<evidence type="ECO:0000305" key="4"/>
<evidence type="ECO:0000305" key="5">
    <source>
    </source>
</evidence>
<evidence type="ECO:0000312" key="6">
    <source>
        <dbReference type="HGNC" id="HGNC:37164"/>
    </source>
</evidence>
<proteinExistence type="evidence at transcript level"/>
<dbReference type="EMBL" id="AL121927">
    <property type="status" value="NOT_ANNOTATED_CDS"/>
    <property type="molecule type" value="Genomic_DNA"/>
</dbReference>
<dbReference type="RefSeq" id="NP_001177418.1">
    <property type="nucleotide sequence ID" value="NM_001190489.1"/>
</dbReference>
<dbReference type="STRING" id="9606.ENSP00000439985"/>
<dbReference type="iPTMnet" id="P0CJ74"/>
<dbReference type="PhosphoSitePlus" id="P0CJ74"/>
<dbReference type="BioMuta" id="MTRNR2L7"/>
<dbReference type="jPOST" id="P0CJ74"/>
<dbReference type="PaxDb" id="9606-ENSP00000439985"/>
<dbReference type="DNASU" id="100288485"/>
<dbReference type="UCSC" id="uc021ppd.2">
    <property type="organism name" value="human"/>
</dbReference>
<dbReference type="AGR" id="HGNC:37164"/>
<dbReference type="GeneCards" id="MTRNR2L7"/>
<dbReference type="HGNC" id="HGNC:37164">
    <property type="gene designation" value="MTRNR2L7"/>
</dbReference>
<dbReference type="neXtProt" id="NX_P0CJ74"/>
<dbReference type="VEuPathDB" id="HostDB:ENSG00000256892"/>
<dbReference type="HOGENOM" id="CLU_221584_0_0_1"/>
<dbReference type="InParanoid" id="P0CJ74"/>
<dbReference type="PAN-GO" id="P0CJ74">
    <property type="GO annotations" value="2 GO annotations based on evolutionary models"/>
</dbReference>
<dbReference type="PhylomeDB" id="P0CJ74"/>
<dbReference type="PathwayCommons" id="P0CJ74"/>
<dbReference type="SignaLink" id="P0CJ74"/>
<dbReference type="BioGRID-ORCS" id="100288485">
    <property type="hits" value="9 hits in 666 CRISPR screens"/>
</dbReference>
<dbReference type="ChiTaRS" id="MTRNR2L7">
    <property type="organism name" value="human"/>
</dbReference>
<dbReference type="Pharos" id="P0CJ74">
    <property type="development level" value="Tdark"/>
</dbReference>
<dbReference type="PRO" id="PR:P0CJ74"/>
<dbReference type="Proteomes" id="UP000005640">
    <property type="component" value="Chromosome 10"/>
</dbReference>
<dbReference type="Bgee" id="ENSG00000256892">
    <property type="expression patterns" value="Expressed in male germ line stem cell (sensu Vertebrata) in testis and 38 other cell types or tissues"/>
</dbReference>
<dbReference type="GO" id="GO:0005737">
    <property type="term" value="C:cytoplasm"/>
    <property type="evidence" value="ECO:0007669"/>
    <property type="project" value="UniProtKB-SubCell"/>
</dbReference>
<dbReference type="GO" id="GO:0005576">
    <property type="term" value="C:extracellular region"/>
    <property type="evidence" value="ECO:0007669"/>
    <property type="project" value="UniProtKB-SubCell"/>
</dbReference>
<dbReference type="GO" id="GO:0048019">
    <property type="term" value="F:receptor antagonist activity"/>
    <property type="evidence" value="ECO:0000318"/>
    <property type="project" value="GO_Central"/>
</dbReference>
<dbReference type="GO" id="GO:1900118">
    <property type="term" value="P:negative regulation of execution phase of apoptosis"/>
    <property type="evidence" value="ECO:0000318"/>
    <property type="project" value="GO_Central"/>
</dbReference>
<dbReference type="CDD" id="cd20245">
    <property type="entry name" value="humanin"/>
    <property type="match status" value="1"/>
</dbReference>
<dbReference type="InterPro" id="IPR028139">
    <property type="entry name" value="Humanin"/>
</dbReference>
<dbReference type="PANTHER" id="PTHR33895">
    <property type="entry name" value="HUMANIN-LIKE 4"/>
    <property type="match status" value="1"/>
</dbReference>
<dbReference type="PANTHER" id="PTHR33895:SF2">
    <property type="entry name" value="HUMANIN-LIKE 7"/>
    <property type="match status" value="1"/>
</dbReference>
<dbReference type="Pfam" id="PF15040">
    <property type="entry name" value="Humanin"/>
    <property type="match status" value="1"/>
</dbReference>
<protein>
    <recommendedName>
        <fullName evidence="4">Humanin-like 7</fullName>
        <shortName evidence="3">HN7</shortName>
    </recommendedName>
    <alternativeName>
        <fullName evidence="6">MT-RNR2-like protein 7</fullName>
    </alternativeName>
</protein>
<comment type="function">
    <text evidence="1">Plays a role as a neuroprotective and antiapoptotic factor.</text>
</comment>
<comment type="subcellular location">
    <subcellularLocation>
        <location evidence="1">Secreted</location>
    </subcellularLocation>
    <subcellularLocation>
        <location evidence="1">Cytoplasm</location>
    </subcellularLocation>
</comment>
<comment type="tissue specificity">
    <text evidence="2">Expressed in testis.</text>
</comment>
<comment type="induction">
    <text evidence="2">Down-regulated 6 hours following staurosporine (STS) treatment and up-regulated 24 hours following STS treatment. Down-regulated 6 hours following beta-carotene treatment, returning to its basal level 24 hours following beta-carotene treatment.</text>
</comment>
<comment type="similarity">
    <text evidence="4">Belongs to the humanin family.</text>
</comment>
<comment type="caution">
    <text evidence="5">The humanin peptide has been shown to be biologically active but is the product of a mitochondrial gene, MT-RNR2. The mechanisms allowing the production and the secretion of humanin from the mitochondrial gene remaining unclear, the possibility exist that the physiologically active humanin peptide is encoded by one of the related genes present in the nuclear genome including the one described here (PubMed:19477263).</text>
</comment>
<sequence>MATGGFGCLLLLIREIDLSVKRQI</sequence>
<reference key="1">
    <citation type="journal article" date="2004" name="Nature">
        <title>The DNA sequence and comparative analysis of human chromosome 10.</title>
        <authorList>
            <person name="Deloukas P."/>
            <person name="Earthrowl M.E."/>
            <person name="Grafham D.V."/>
            <person name="Rubenfield M."/>
            <person name="French L."/>
            <person name="Steward C.A."/>
            <person name="Sims S.K."/>
            <person name="Jones M.C."/>
            <person name="Searle S."/>
            <person name="Scott C."/>
            <person name="Howe K."/>
            <person name="Hunt S.E."/>
            <person name="Andrews T.D."/>
            <person name="Gilbert J.G.R."/>
            <person name="Swarbreck D."/>
            <person name="Ashurst J.L."/>
            <person name="Taylor A."/>
            <person name="Battles J."/>
            <person name="Bird C.P."/>
            <person name="Ainscough R."/>
            <person name="Almeida J.P."/>
            <person name="Ashwell R.I.S."/>
            <person name="Ambrose K.D."/>
            <person name="Babbage A.K."/>
            <person name="Bagguley C.L."/>
            <person name="Bailey J."/>
            <person name="Banerjee R."/>
            <person name="Bates K."/>
            <person name="Beasley H."/>
            <person name="Bray-Allen S."/>
            <person name="Brown A.J."/>
            <person name="Brown J.Y."/>
            <person name="Burford D.C."/>
            <person name="Burrill W."/>
            <person name="Burton J."/>
            <person name="Cahill P."/>
            <person name="Camire D."/>
            <person name="Carter N.P."/>
            <person name="Chapman J.C."/>
            <person name="Clark S.Y."/>
            <person name="Clarke G."/>
            <person name="Clee C.M."/>
            <person name="Clegg S."/>
            <person name="Corby N."/>
            <person name="Coulson A."/>
            <person name="Dhami P."/>
            <person name="Dutta I."/>
            <person name="Dunn M."/>
            <person name="Faulkner L."/>
            <person name="Frankish A."/>
            <person name="Frankland J.A."/>
            <person name="Garner P."/>
            <person name="Garnett J."/>
            <person name="Gribble S."/>
            <person name="Griffiths C."/>
            <person name="Grocock R."/>
            <person name="Gustafson E."/>
            <person name="Hammond S."/>
            <person name="Harley J.L."/>
            <person name="Hart E."/>
            <person name="Heath P.D."/>
            <person name="Ho T.P."/>
            <person name="Hopkins B."/>
            <person name="Horne J."/>
            <person name="Howden P.J."/>
            <person name="Huckle E."/>
            <person name="Hynds C."/>
            <person name="Johnson C."/>
            <person name="Johnson D."/>
            <person name="Kana A."/>
            <person name="Kay M."/>
            <person name="Kimberley A.M."/>
            <person name="Kershaw J.K."/>
            <person name="Kokkinaki M."/>
            <person name="Laird G.K."/>
            <person name="Lawlor S."/>
            <person name="Lee H.M."/>
            <person name="Leongamornlert D.A."/>
            <person name="Laird G."/>
            <person name="Lloyd C."/>
            <person name="Lloyd D.M."/>
            <person name="Loveland J."/>
            <person name="Lovell J."/>
            <person name="McLaren S."/>
            <person name="McLay K.E."/>
            <person name="McMurray A."/>
            <person name="Mashreghi-Mohammadi M."/>
            <person name="Matthews L."/>
            <person name="Milne S."/>
            <person name="Nickerson T."/>
            <person name="Nguyen M."/>
            <person name="Overton-Larty E."/>
            <person name="Palmer S.A."/>
            <person name="Pearce A.V."/>
            <person name="Peck A.I."/>
            <person name="Pelan S."/>
            <person name="Phillimore B."/>
            <person name="Porter K."/>
            <person name="Rice C.M."/>
            <person name="Rogosin A."/>
            <person name="Ross M.T."/>
            <person name="Sarafidou T."/>
            <person name="Sehra H.K."/>
            <person name="Shownkeen R."/>
            <person name="Skuce C.D."/>
            <person name="Smith M."/>
            <person name="Standring L."/>
            <person name="Sycamore N."/>
            <person name="Tester J."/>
            <person name="Thorpe A."/>
            <person name="Torcasso W."/>
            <person name="Tracey A."/>
            <person name="Tromans A."/>
            <person name="Tsolas J."/>
            <person name="Wall M."/>
            <person name="Walsh J."/>
            <person name="Wang H."/>
            <person name="Weinstock K."/>
            <person name="West A.P."/>
            <person name="Willey D.L."/>
            <person name="Whitehead S.L."/>
            <person name="Wilming L."/>
            <person name="Wray P.W."/>
            <person name="Young L."/>
            <person name="Chen Y."/>
            <person name="Lovering R.C."/>
            <person name="Moschonas N.K."/>
            <person name="Siebert R."/>
            <person name="Fechtel K."/>
            <person name="Bentley D."/>
            <person name="Durbin R.M."/>
            <person name="Hubbard T."/>
            <person name="Doucette-Stamm L."/>
            <person name="Beck S."/>
            <person name="Smith D.R."/>
            <person name="Rogers J."/>
        </authorList>
    </citation>
    <scope>NUCLEOTIDE SEQUENCE [LARGE SCALE GENOMIC DNA]</scope>
</reference>
<reference key="2">
    <citation type="journal article" date="2009" name="Genomics">
        <title>Evidence for potential functionality of nuclearly-encoded humanin isoforms.</title>
        <authorList>
            <person name="Bodzioch M."/>
            <person name="Lapicka-Bodzioch K."/>
            <person name="Zapala B."/>
            <person name="Kamysz W."/>
            <person name="Kiec-Wilk B."/>
            <person name="Dembinska-Kiec A."/>
        </authorList>
    </citation>
    <scope>TISSUE SPECIFICITY</scope>
    <scope>INDUCTION</scope>
</reference>
<accession>P0CJ74</accession>
<organism>
    <name type="scientific">Homo sapiens</name>
    <name type="common">Human</name>
    <dbReference type="NCBI Taxonomy" id="9606"/>
    <lineage>
        <taxon>Eukaryota</taxon>
        <taxon>Metazoa</taxon>
        <taxon>Chordata</taxon>
        <taxon>Craniata</taxon>
        <taxon>Vertebrata</taxon>
        <taxon>Euteleostomi</taxon>
        <taxon>Mammalia</taxon>
        <taxon>Eutheria</taxon>
        <taxon>Euarchontoglires</taxon>
        <taxon>Primates</taxon>
        <taxon>Haplorrhini</taxon>
        <taxon>Catarrhini</taxon>
        <taxon>Hominidae</taxon>
        <taxon>Homo</taxon>
    </lineage>
</organism>
<feature type="chain" id="PRO_0000404556" description="Humanin-like 7">
    <location>
        <begin position="1"/>
        <end position="24"/>
    </location>
</feature>
<gene>
    <name evidence="6" type="primary">MTRNR2L7</name>
</gene>
<keyword id="KW-0963">Cytoplasm</keyword>
<keyword id="KW-1185">Reference proteome</keyword>
<keyword id="KW-0964">Secreted</keyword>
<name>HMN7_HUMAN</name>